<reference key="1">
    <citation type="journal article" date="1995" name="Mech. Dev.">
        <title>The expression pattern of the Distal-less homeobox-containing gene Dlx-5 in the developing chick limb bud suggests its involvement in apical ectodermal ridge activity, pattern formation, and cartilage differentiation.</title>
        <authorList>
            <person name="Ferrari D."/>
            <person name="Sumoy L."/>
            <person name="Gannon J."/>
            <person name="Sun H."/>
            <person name="Brown A.M."/>
            <person name="Upholt W.B."/>
            <person name="Kosher R.A."/>
        </authorList>
    </citation>
    <scope>NUCLEOTIDE SEQUENCE [MRNA]</scope>
    <source>
        <strain>White leghorn</strain>
    </source>
</reference>
<reference key="2">
    <citation type="journal article" date="2000" name="Dev. Neurosci.">
        <title>Chick homeobox gene cDlx expression demarcates the forebrain anlage, indicating the onset of forebrain regional specification at gastrulation.</title>
        <authorList>
            <person name="Borghjid S."/>
            <person name="Siddiqui M.A.Q."/>
        </authorList>
    </citation>
    <scope>NUCLEOTIDE SEQUENCE [MRNA]</scope>
    <source>
        <strain>White leghorn</strain>
    </source>
</reference>
<feature type="chain" id="PRO_0000049030" description="Homeobox protein DLX-5">
    <location>
        <begin position="1"/>
        <end position="286"/>
    </location>
</feature>
<feature type="DNA-binding region" description="Homeobox" evidence="1">
    <location>
        <begin position="136"/>
        <end position="195"/>
    </location>
</feature>
<feature type="region of interest" description="Disordered" evidence="2">
    <location>
        <begin position="1"/>
        <end position="52"/>
    </location>
</feature>
<feature type="region of interest" description="Disordered" evidence="2">
    <location>
        <begin position="197"/>
        <end position="286"/>
    </location>
</feature>
<feature type="compositionally biased region" description="Polar residues" evidence="2">
    <location>
        <begin position="32"/>
        <end position="48"/>
    </location>
</feature>
<feature type="compositionally biased region" description="Polar residues" evidence="2">
    <location>
        <begin position="205"/>
        <end position="219"/>
    </location>
</feature>
<feature type="compositionally biased region" description="Low complexity" evidence="2">
    <location>
        <begin position="239"/>
        <end position="249"/>
    </location>
</feature>
<name>DLX5_CHICK</name>
<dbReference type="EMBL" id="U25274">
    <property type="protein sequence ID" value="AAA96145.1"/>
    <property type="molecule type" value="mRNA"/>
</dbReference>
<dbReference type="EMBL" id="AF096161">
    <property type="protein sequence ID" value="AAF00085.1"/>
    <property type="molecule type" value="mRNA"/>
</dbReference>
<dbReference type="RefSeq" id="NP_989490.1">
    <property type="nucleotide sequence ID" value="NM_204159.2"/>
</dbReference>
<dbReference type="BMRB" id="P50577"/>
<dbReference type="SMR" id="P50577"/>
<dbReference type="FunCoup" id="P50577">
    <property type="interactions" value="2"/>
</dbReference>
<dbReference type="STRING" id="9031.ENSGALP00000014846"/>
<dbReference type="PaxDb" id="9031-ENSGALP00000014846"/>
<dbReference type="Ensembl" id="ENSGALT00010006891.1">
    <property type="protein sequence ID" value="ENSGALP00010004206.1"/>
    <property type="gene ID" value="ENSGALG00010002959.1"/>
</dbReference>
<dbReference type="GeneID" id="373969"/>
<dbReference type="KEGG" id="gga:373969"/>
<dbReference type="CTD" id="1749"/>
<dbReference type="VEuPathDB" id="HostDB:geneid_373969"/>
<dbReference type="eggNOG" id="KOG0850">
    <property type="taxonomic scope" value="Eukaryota"/>
</dbReference>
<dbReference type="GeneTree" id="ENSGT00940000159188"/>
<dbReference type="HOGENOM" id="CLU_074733_0_0_1"/>
<dbReference type="InParanoid" id="P50577"/>
<dbReference type="OMA" id="GVSHGYC"/>
<dbReference type="OrthoDB" id="6159439at2759"/>
<dbReference type="PhylomeDB" id="P50577"/>
<dbReference type="TreeFam" id="TF350606"/>
<dbReference type="PRO" id="PR:P50577"/>
<dbReference type="Proteomes" id="UP000000539">
    <property type="component" value="Chromosome 2"/>
</dbReference>
<dbReference type="Bgee" id="ENSGALG00000009129">
    <property type="expression patterns" value="Expressed in brain"/>
</dbReference>
<dbReference type="GO" id="GO:0000785">
    <property type="term" value="C:chromatin"/>
    <property type="evidence" value="ECO:0007669"/>
    <property type="project" value="Ensembl"/>
</dbReference>
<dbReference type="GO" id="GO:0005737">
    <property type="term" value="C:cytoplasm"/>
    <property type="evidence" value="ECO:0007669"/>
    <property type="project" value="Ensembl"/>
</dbReference>
<dbReference type="GO" id="GO:0005654">
    <property type="term" value="C:nucleoplasm"/>
    <property type="evidence" value="ECO:0000304"/>
    <property type="project" value="Reactome"/>
</dbReference>
<dbReference type="GO" id="GO:0001228">
    <property type="term" value="F:DNA-binding transcription activator activity, RNA polymerase II-specific"/>
    <property type="evidence" value="ECO:0007669"/>
    <property type="project" value="Ensembl"/>
</dbReference>
<dbReference type="GO" id="GO:0000981">
    <property type="term" value="F:DNA-binding transcription factor activity, RNA polymerase II-specific"/>
    <property type="evidence" value="ECO:0000318"/>
    <property type="project" value="GO_Central"/>
</dbReference>
<dbReference type="GO" id="GO:0071837">
    <property type="term" value="F:HMG box domain binding"/>
    <property type="evidence" value="ECO:0007669"/>
    <property type="project" value="Ensembl"/>
</dbReference>
<dbReference type="GO" id="GO:0000978">
    <property type="term" value="F:RNA polymerase II cis-regulatory region sequence-specific DNA binding"/>
    <property type="evidence" value="ECO:0000318"/>
    <property type="project" value="GO_Central"/>
</dbReference>
<dbReference type="GO" id="GO:0048646">
    <property type="term" value="P:anatomical structure formation involved in morphogenesis"/>
    <property type="evidence" value="ECO:0007669"/>
    <property type="project" value="Ensembl"/>
</dbReference>
<dbReference type="GO" id="GO:0030509">
    <property type="term" value="P:BMP signaling pathway"/>
    <property type="evidence" value="ECO:0007669"/>
    <property type="project" value="Ensembl"/>
</dbReference>
<dbReference type="GO" id="GO:0030154">
    <property type="term" value="P:cell differentiation"/>
    <property type="evidence" value="ECO:0000318"/>
    <property type="project" value="GO_Central"/>
</dbReference>
<dbReference type="GO" id="GO:0008283">
    <property type="term" value="P:cell population proliferation"/>
    <property type="evidence" value="ECO:0007669"/>
    <property type="project" value="Ensembl"/>
</dbReference>
<dbReference type="GO" id="GO:0030326">
    <property type="term" value="P:embryonic limb morphogenesis"/>
    <property type="evidence" value="ECO:0007669"/>
    <property type="project" value="Ensembl"/>
</dbReference>
<dbReference type="GO" id="GO:0048706">
    <property type="term" value="P:embryonic skeletal system development"/>
    <property type="evidence" value="ECO:0000318"/>
    <property type="project" value="GO_Central"/>
</dbReference>
<dbReference type="GO" id="GO:0001958">
    <property type="term" value="P:endochondral ossification"/>
    <property type="evidence" value="ECO:0007669"/>
    <property type="project" value="Ensembl"/>
</dbReference>
<dbReference type="GO" id="GO:0030855">
    <property type="term" value="P:epithelial cell differentiation"/>
    <property type="evidence" value="ECO:0007669"/>
    <property type="project" value="Ensembl"/>
</dbReference>
<dbReference type="GO" id="GO:0060325">
    <property type="term" value="P:face morphogenesis"/>
    <property type="evidence" value="ECO:0007669"/>
    <property type="project" value="Ensembl"/>
</dbReference>
<dbReference type="GO" id="GO:0042472">
    <property type="term" value="P:inner ear morphogenesis"/>
    <property type="evidence" value="ECO:0007669"/>
    <property type="project" value="Ensembl"/>
</dbReference>
<dbReference type="GO" id="GO:0097376">
    <property type="term" value="P:interneuron axon guidance"/>
    <property type="evidence" value="ECO:0007669"/>
    <property type="project" value="Ensembl"/>
</dbReference>
<dbReference type="GO" id="GO:0021889">
    <property type="term" value="P:olfactory bulb interneuron differentiation"/>
    <property type="evidence" value="ECO:0007669"/>
    <property type="project" value="Ensembl"/>
</dbReference>
<dbReference type="GO" id="GO:0060166">
    <property type="term" value="P:olfactory pit development"/>
    <property type="evidence" value="ECO:0007669"/>
    <property type="project" value="Ensembl"/>
</dbReference>
<dbReference type="GO" id="GO:0001649">
    <property type="term" value="P:osteoblast differentiation"/>
    <property type="evidence" value="ECO:0007669"/>
    <property type="project" value="Ensembl"/>
</dbReference>
<dbReference type="GO" id="GO:0090263">
    <property type="term" value="P:positive regulation of canonical Wnt signaling pathway"/>
    <property type="evidence" value="ECO:0007669"/>
    <property type="project" value="Ensembl"/>
</dbReference>
<dbReference type="GO" id="GO:0050679">
    <property type="term" value="P:positive regulation of epithelial cell proliferation"/>
    <property type="evidence" value="ECO:0007669"/>
    <property type="project" value="Ensembl"/>
</dbReference>
<dbReference type="GO" id="GO:0010628">
    <property type="term" value="P:positive regulation of gene expression"/>
    <property type="evidence" value="ECO:0007669"/>
    <property type="project" value="Ensembl"/>
</dbReference>
<dbReference type="GO" id="GO:0006357">
    <property type="term" value="P:regulation of transcription by RNA polymerase II"/>
    <property type="evidence" value="ECO:0000318"/>
    <property type="project" value="GO_Central"/>
</dbReference>
<dbReference type="GO" id="GO:0060021">
    <property type="term" value="P:roof of mouth development"/>
    <property type="evidence" value="ECO:0007669"/>
    <property type="project" value="Ensembl"/>
</dbReference>
<dbReference type="CDD" id="cd00086">
    <property type="entry name" value="homeodomain"/>
    <property type="match status" value="1"/>
</dbReference>
<dbReference type="FunFam" id="1.10.10.60:FF:000048">
    <property type="entry name" value="Distal-less homeobox 2"/>
    <property type="match status" value="1"/>
</dbReference>
<dbReference type="Gene3D" id="1.10.10.60">
    <property type="entry name" value="Homeodomain-like"/>
    <property type="match status" value="1"/>
</dbReference>
<dbReference type="InterPro" id="IPR050460">
    <property type="entry name" value="Distal-less_Homeobox_TF"/>
</dbReference>
<dbReference type="InterPro" id="IPR022135">
    <property type="entry name" value="Distal-less_N"/>
</dbReference>
<dbReference type="InterPro" id="IPR001356">
    <property type="entry name" value="HD"/>
</dbReference>
<dbReference type="InterPro" id="IPR020479">
    <property type="entry name" value="HD_metazoa"/>
</dbReference>
<dbReference type="InterPro" id="IPR017970">
    <property type="entry name" value="Homeobox_CS"/>
</dbReference>
<dbReference type="InterPro" id="IPR009057">
    <property type="entry name" value="Homeodomain-like_sf"/>
</dbReference>
<dbReference type="InterPro" id="IPR000047">
    <property type="entry name" value="HTH_motif"/>
</dbReference>
<dbReference type="PANTHER" id="PTHR24327">
    <property type="entry name" value="HOMEOBOX PROTEIN"/>
    <property type="match status" value="1"/>
</dbReference>
<dbReference type="PANTHER" id="PTHR24327:SF31">
    <property type="entry name" value="HOMEOBOX PROTEIN DLX-5"/>
    <property type="match status" value="1"/>
</dbReference>
<dbReference type="Pfam" id="PF12413">
    <property type="entry name" value="DLL_N"/>
    <property type="match status" value="1"/>
</dbReference>
<dbReference type="Pfam" id="PF00046">
    <property type="entry name" value="Homeodomain"/>
    <property type="match status" value="1"/>
</dbReference>
<dbReference type="PRINTS" id="PR00024">
    <property type="entry name" value="HOMEOBOX"/>
</dbReference>
<dbReference type="PRINTS" id="PR00031">
    <property type="entry name" value="HTHREPRESSR"/>
</dbReference>
<dbReference type="SMART" id="SM00389">
    <property type="entry name" value="HOX"/>
    <property type="match status" value="1"/>
</dbReference>
<dbReference type="SUPFAM" id="SSF46689">
    <property type="entry name" value="Homeodomain-like"/>
    <property type="match status" value="1"/>
</dbReference>
<dbReference type="PROSITE" id="PS00027">
    <property type="entry name" value="HOMEOBOX_1"/>
    <property type="match status" value="1"/>
</dbReference>
<dbReference type="PROSITE" id="PS50071">
    <property type="entry name" value="HOMEOBOX_2"/>
    <property type="match status" value="1"/>
</dbReference>
<keyword id="KW-0217">Developmental protein</keyword>
<keyword id="KW-0238">DNA-binding</keyword>
<keyword id="KW-0371">Homeobox</keyword>
<keyword id="KW-0539">Nucleus</keyword>
<keyword id="KW-0892">Osteogenesis</keyword>
<keyword id="KW-1185">Reference proteome</keyword>
<keyword id="KW-0804">Transcription</keyword>
<keyword id="KW-0805">Transcription regulation</keyword>
<evidence type="ECO:0000255" key="1">
    <source>
        <dbReference type="PROSITE-ProRule" id="PRU00108"/>
    </source>
</evidence>
<evidence type="ECO:0000256" key="2">
    <source>
        <dbReference type="SAM" id="MobiDB-lite"/>
    </source>
</evidence>
<evidence type="ECO:0000305" key="3"/>
<accession>P50577</accession>
<accession>Q549L3</accession>
<gene>
    <name type="primary">DLX5</name>
    <name type="synonym">DLX-5</name>
</gene>
<protein>
    <recommendedName>
        <fullName>Homeobox protein DLX-5</fullName>
        <shortName>cDlx</shortName>
    </recommendedName>
</protein>
<comment type="function">
    <text>Transcriptional factor involved in bone development. Could be involved in apical ectodermal ridge activity, pattern formation, and cartilage differentiation. Binds to DNA.</text>
</comment>
<comment type="subcellular location">
    <subcellularLocation>
        <location evidence="1">Nucleus</location>
    </subcellularLocation>
</comment>
<comment type="similarity">
    <text evidence="3">Belongs to the distal-less homeobox family.</text>
</comment>
<sequence>MTAVFDRRVPGIRSSDFQPPFQSAAAMHHPSQESPTLPESSATDSDYYSPTGAAPHGYCSPTSASYGKALNPYQYQYGMNGSAGTYPAKAYADYGYGSPYHQYGGAYGRGQSSAGQPEKEVAEPEVRMVNGKPKKVRKPRTIYSSFQLAALQRRFQKTQYLALPERAELAASLGLTQTQVKIWFQNKRSKIKKIMKNGEMPPEHSPSSSDPMACNSPQSPAVWEPQGSSRSLGHHGHGHPPAANPSPGSYLESPSAWYPAASPLGSHLQPHGSLQHPLALPSGTIY</sequence>
<proteinExistence type="evidence at transcript level"/>
<organism>
    <name type="scientific">Gallus gallus</name>
    <name type="common">Chicken</name>
    <dbReference type="NCBI Taxonomy" id="9031"/>
    <lineage>
        <taxon>Eukaryota</taxon>
        <taxon>Metazoa</taxon>
        <taxon>Chordata</taxon>
        <taxon>Craniata</taxon>
        <taxon>Vertebrata</taxon>
        <taxon>Euteleostomi</taxon>
        <taxon>Archelosauria</taxon>
        <taxon>Archosauria</taxon>
        <taxon>Dinosauria</taxon>
        <taxon>Saurischia</taxon>
        <taxon>Theropoda</taxon>
        <taxon>Coelurosauria</taxon>
        <taxon>Aves</taxon>
        <taxon>Neognathae</taxon>
        <taxon>Galloanserae</taxon>
        <taxon>Galliformes</taxon>
        <taxon>Phasianidae</taxon>
        <taxon>Phasianinae</taxon>
        <taxon>Gallus</taxon>
    </lineage>
</organism>